<sequence length="128" mass="14531">MLGVLLVLHGSKIPEWKDVGIKYAEYLSRYFNLVEFGFLEFNKPTLSEALSNLLAKGANKIVVVPLLFATGTHFKRDIPRLLGIDGDEKKIQYMGKEIEIIIADPLGFDEKIGEVLVKRVNETYNKNY</sequence>
<organism>
    <name type="scientific">Saccharolobus islandicus (strain M.14.25 / Kamchatka #1)</name>
    <name type="common">Sulfolobus islandicus</name>
    <dbReference type="NCBI Taxonomy" id="427317"/>
    <lineage>
        <taxon>Archaea</taxon>
        <taxon>Thermoproteota</taxon>
        <taxon>Thermoprotei</taxon>
        <taxon>Sulfolobales</taxon>
        <taxon>Sulfolobaceae</taxon>
        <taxon>Saccharolobus</taxon>
    </lineage>
</organism>
<reference key="1">
    <citation type="journal article" date="2009" name="Proc. Natl. Acad. Sci. U.S.A.">
        <title>Biogeography of the Sulfolobus islandicus pan-genome.</title>
        <authorList>
            <person name="Reno M.L."/>
            <person name="Held N.L."/>
            <person name="Fields C.J."/>
            <person name="Burke P.V."/>
            <person name="Whitaker R.J."/>
        </authorList>
    </citation>
    <scope>NUCLEOTIDE SEQUENCE [LARGE SCALE GENOMIC DNA]</scope>
    <source>
        <strain>M.14.25 / Kamchatka #1</strain>
    </source>
</reference>
<accession>C3MWZ3</accession>
<comment type="function">
    <text evidence="1">Catalyzes the insertion of Co(2+) into sirohydrochlorin as part of the anaerobic pathway to cobalamin biosynthesis.</text>
</comment>
<comment type="catalytic activity">
    <reaction evidence="1">
        <text>Co-sirohydrochlorin + 2 H(+) = sirohydrochlorin + Co(2+)</text>
        <dbReference type="Rhea" id="RHEA:15893"/>
        <dbReference type="ChEBI" id="CHEBI:15378"/>
        <dbReference type="ChEBI" id="CHEBI:48828"/>
        <dbReference type="ChEBI" id="CHEBI:58351"/>
        <dbReference type="ChEBI" id="CHEBI:60049"/>
        <dbReference type="EC" id="4.99.1.3"/>
    </reaction>
</comment>
<comment type="pathway">
    <text evidence="1">Cofactor biosynthesis; adenosylcobalamin biosynthesis; cob(II)yrinate a,c-diamide from sirohydrochlorin (anaerobic route): step 1/10.</text>
</comment>
<comment type="subunit">
    <text evidence="1">Homotetramer; dimer of dimers.</text>
</comment>
<comment type="similarity">
    <text evidence="1">Belongs to the CbiX family. CbiXS subfamily.</text>
</comment>
<dbReference type="EC" id="4.99.1.3" evidence="1"/>
<dbReference type="EMBL" id="CP001400">
    <property type="protein sequence ID" value="ACP38443.1"/>
    <property type="molecule type" value="Genomic_DNA"/>
</dbReference>
<dbReference type="RefSeq" id="WP_012711674.1">
    <property type="nucleotide sequence ID" value="NC_012588.1"/>
</dbReference>
<dbReference type="SMR" id="C3MWZ3"/>
<dbReference type="KEGG" id="sia:M1425_1694"/>
<dbReference type="HOGENOM" id="CLU_065901_2_1_2"/>
<dbReference type="UniPathway" id="UPA00148">
    <property type="reaction ID" value="UER00223"/>
</dbReference>
<dbReference type="Proteomes" id="UP000001350">
    <property type="component" value="Chromosome"/>
</dbReference>
<dbReference type="GO" id="GO:0050897">
    <property type="term" value="F:cobalt ion binding"/>
    <property type="evidence" value="ECO:0007669"/>
    <property type="project" value="UniProtKB-UniRule"/>
</dbReference>
<dbReference type="GO" id="GO:0016852">
    <property type="term" value="F:sirohydrochlorin cobaltochelatase activity"/>
    <property type="evidence" value="ECO:0007669"/>
    <property type="project" value="UniProtKB-UniRule"/>
</dbReference>
<dbReference type="GO" id="GO:0019251">
    <property type="term" value="P:anaerobic cobalamin biosynthetic process"/>
    <property type="evidence" value="ECO:0007669"/>
    <property type="project" value="UniProtKB-UniRule"/>
</dbReference>
<dbReference type="CDD" id="cd03416">
    <property type="entry name" value="CbiX_SirB_N"/>
    <property type="match status" value="1"/>
</dbReference>
<dbReference type="Gene3D" id="3.40.50.1400">
    <property type="match status" value="1"/>
</dbReference>
<dbReference type="HAMAP" id="MF_00785">
    <property type="entry name" value="CbiX"/>
    <property type="match status" value="1"/>
</dbReference>
<dbReference type="InterPro" id="IPR002762">
    <property type="entry name" value="CbiX-like"/>
</dbReference>
<dbReference type="InterPro" id="IPR023652">
    <property type="entry name" value="SiroHydchlorin_Cochelatase"/>
</dbReference>
<dbReference type="InterPro" id="IPR050963">
    <property type="entry name" value="Sirohydro_Cobaltochel/CbiX"/>
</dbReference>
<dbReference type="PANTHER" id="PTHR33542">
    <property type="entry name" value="SIROHYDROCHLORIN FERROCHELATASE, CHLOROPLASTIC"/>
    <property type="match status" value="1"/>
</dbReference>
<dbReference type="PANTHER" id="PTHR33542:SF3">
    <property type="entry name" value="SIROHYDROCHLORIN FERROCHELATASE, CHLOROPLASTIC"/>
    <property type="match status" value="1"/>
</dbReference>
<dbReference type="Pfam" id="PF01903">
    <property type="entry name" value="CbiX"/>
    <property type="match status" value="1"/>
</dbReference>
<dbReference type="SUPFAM" id="SSF53800">
    <property type="entry name" value="Chelatase"/>
    <property type="match status" value="1"/>
</dbReference>
<name>CBIX_SACI4</name>
<evidence type="ECO:0000255" key="1">
    <source>
        <dbReference type="HAMAP-Rule" id="MF_00785"/>
    </source>
</evidence>
<protein>
    <recommendedName>
        <fullName evidence="1">Sirohydrochlorin cobaltochelatase</fullName>
        <ecNumber evidence="1">4.99.1.3</ecNumber>
    </recommendedName>
    <alternativeName>
        <fullName evidence="1">CbiXS</fullName>
    </alternativeName>
</protein>
<feature type="chain" id="PRO_1000212926" description="Sirohydrochlorin cobaltochelatase">
    <location>
        <begin position="1"/>
        <end position="128"/>
    </location>
</feature>
<feature type="active site" description="Proton acceptor" evidence="1">
    <location>
        <position position="9"/>
    </location>
</feature>
<feature type="binding site" evidence="1">
    <location>
        <position position="9"/>
    </location>
    <ligand>
        <name>Co(2+)</name>
        <dbReference type="ChEBI" id="CHEBI:48828"/>
    </ligand>
</feature>
<feature type="binding site" evidence="1">
    <location>
        <position position="43"/>
    </location>
    <ligand>
        <name>substrate</name>
    </ligand>
</feature>
<feature type="binding site" evidence="1">
    <location>
        <begin position="68"/>
        <end position="73"/>
    </location>
    <ligand>
        <name>substrate</name>
    </ligand>
</feature>
<feature type="binding site" evidence="1">
    <location>
        <position position="73"/>
    </location>
    <ligand>
        <name>Co(2+)</name>
        <dbReference type="ChEBI" id="CHEBI:48828"/>
    </ligand>
</feature>
<gene>
    <name evidence="1" type="primary">cbiX</name>
    <name type="ordered locus">M1425_1694</name>
</gene>
<proteinExistence type="inferred from homology"/>
<keyword id="KW-0169">Cobalamin biosynthesis</keyword>
<keyword id="KW-0170">Cobalt</keyword>
<keyword id="KW-0456">Lyase</keyword>
<keyword id="KW-0479">Metal-binding</keyword>